<sequence length="141" mass="15126">MAIILGADAHGNALKELIKSFLQEEGYDIIDVTDINSDFIDNTLAVAKAVNEAEGRLGIMVDAYGAGPFMVATKLKGMVAAEVSDERSAYMTRGHNNARMITIGAEIVGPELAKNIVKGFVTGPYDGGRHQIRVDMLNKMA</sequence>
<evidence type="ECO:0000255" key="1">
    <source>
        <dbReference type="HAMAP-Rule" id="MF_01555"/>
    </source>
</evidence>
<accession>Q99YH1</accession>
<accession>Q48XA9</accession>
<proteinExistence type="inferred from homology"/>
<organism>
    <name type="scientific">Streptococcus pyogenes serotype M1</name>
    <dbReference type="NCBI Taxonomy" id="301447"/>
    <lineage>
        <taxon>Bacteria</taxon>
        <taxon>Bacillati</taxon>
        <taxon>Bacillota</taxon>
        <taxon>Bacilli</taxon>
        <taxon>Lactobacillales</taxon>
        <taxon>Streptococcaceae</taxon>
        <taxon>Streptococcus</taxon>
    </lineage>
</organism>
<feature type="chain" id="PRO_0000208122" description="Galactose-6-phosphate isomerase subunit LacA 1">
    <location>
        <begin position="1"/>
        <end position="141"/>
    </location>
</feature>
<keyword id="KW-0413">Isomerase</keyword>
<keyword id="KW-0423">Lactose metabolism</keyword>
<keyword id="KW-1185">Reference proteome</keyword>
<comment type="catalytic activity">
    <reaction evidence="1">
        <text>aldehydo-D-galactose 6-phosphate = keto-D-tagatose 6-phosphate</text>
        <dbReference type="Rhea" id="RHEA:13033"/>
        <dbReference type="ChEBI" id="CHEBI:58255"/>
        <dbReference type="ChEBI" id="CHEBI:134283"/>
        <dbReference type="EC" id="5.3.1.26"/>
    </reaction>
</comment>
<comment type="pathway">
    <text evidence="1">Carbohydrate metabolism; D-galactose 6-phosphate degradation; D-tagatose 6-phosphate from D-galactose 6-phosphate: step 1/1.</text>
</comment>
<comment type="subunit">
    <text evidence="1">Heteromultimeric protein consisting of LacA and LacB.</text>
</comment>
<comment type="similarity">
    <text evidence="1">Belongs to the LacAB/RpiB family.</text>
</comment>
<reference key="1">
    <citation type="journal article" date="2001" name="Proc. Natl. Acad. Sci. U.S.A.">
        <title>Complete genome sequence of an M1 strain of Streptococcus pyogenes.</title>
        <authorList>
            <person name="Ferretti J.J."/>
            <person name="McShan W.M."/>
            <person name="Ajdic D.J."/>
            <person name="Savic D.J."/>
            <person name="Savic G."/>
            <person name="Lyon K."/>
            <person name="Primeaux C."/>
            <person name="Sezate S."/>
            <person name="Suvorov A.N."/>
            <person name="Kenton S."/>
            <person name="Lai H.S."/>
            <person name="Lin S.P."/>
            <person name="Qian Y."/>
            <person name="Jia H.G."/>
            <person name="Najar F.Z."/>
            <person name="Ren Q."/>
            <person name="Zhu H."/>
            <person name="Song L."/>
            <person name="White J."/>
            <person name="Yuan X."/>
            <person name="Clifton S.W."/>
            <person name="Roe B.A."/>
            <person name="McLaughlin R.E."/>
        </authorList>
    </citation>
    <scope>NUCLEOTIDE SEQUENCE [LARGE SCALE GENOMIC DNA]</scope>
    <source>
        <strain>ATCC 700294 / SF370 / Serotype M1</strain>
    </source>
</reference>
<reference key="2">
    <citation type="journal article" date="2005" name="J. Infect. Dis.">
        <title>Evolutionary origin and emergence of a highly successful clone of serotype M1 group A Streptococcus involved multiple horizontal gene transfer events.</title>
        <authorList>
            <person name="Sumby P."/>
            <person name="Porcella S.F."/>
            <person name="Madrigal A.G."/>
            <person name="Barbian K.D."/>
            <person name="Virtaneva K."/>
            <person name="Ricklefs S.M."/>
            <person name="Sturdevant D.E."/>
            <person name="Graham M.R."/>
            <person name="Vuopio-Varkila J."/>
            <person name="Hoe N.P."/>
            <person name="Musser J.M."/>
        </authorList>
    </citation>
    <scope>NUCLEOTIDE SEQUENCE [LARGE SCALE GENOMIC DNA]</scope>
    <source>
        <strain>ATCC BAA-947 / MGAS5005 / Serotype M1</strain>
    </source>
</reference>
<name>LACA1_STRP1</name>
<dbReference type="EC" id="5.3.1.26" evidence="1"/>
<dbReference type="EMBL" id="AE004092">
    <property type="protein sequence ID" value="AAK34456.1"/>
    <property type="molecule type" value="Genomic_DNA"/>
</dbReference>
<dbReference type="EMBL" id="CP000017">
    <property type="protein sequence ID" value="AAZ52016.1"/>
    <property type="molecule type" value="Genomic_DNA"/>
</dbReference>
<dbReference type="RefSeq" id="NP_269735.1">
    <property type="nucleotide sequence ID" value="NC_002737.2"/>
</dbReference>
<dbReference type="SMR" id="Q99YH1"/>
<dbReference type="PaxDb" id="1314-HKU360_01452"/>
<dbReference type="KEGG" id="spy:SPy_1708"/>
<dbReference type="KEGG" id="spz:M5005_Spy1398"/>
<dbReference type="PATRIC" id="fig|160490.10.peg.1485"/>
<dbReference type="HOGENOM" id="CLU_091396_4_2_9"/>
<dbReference type="OMA" id="SAMMTIR"/>
<dbReference type="UniPathway" id="UPA00702">
    <property type="reaction ID" value="UER00714"/>
</dbReference>
<dbReference type="Proteomes" id="UP000000750">
    <property type="component" value="Chromosome"/>
</dbReference>
<dbReference type="GO" id="GO:0050044">
    <property type="term" value="F:galactose-6-phosphate isomerase activity"/>
    <property type="evidence" value="ECO:0007669"/>
    <property type="project" value="UniProtKB-UniRule"/>
</dbReference>
<dbReference type="GO" id="GO:0004751">
    <property type="term" value="F:ribose-5-phosphate isomerase activity"/>
    <property type="evidence" value="ECO:0007669"/>
    <property type="project" value="TreeGrafter"/>
</dbReference>
<dbReference type="GO" id="GO:0019316">
    <property type="term" value="P:D-allose catabolic process"/>
    <property type="evidence" value="ECO:0007669"/>
    <property type="project" value="TreeGrafter"/>
</dbReference>
<dbReference type="GO" id="GO:0019388">
    <property type="term" value="P:galactose catabolic process"/>
    <property type="evidence" value="ECO:0007669"/>
    <property type="project" value="UniProtKB-UniPathway"/>
</dbReference>
<dbReference type="GO" id="GO:0019512">
    <property type="term" value="P:lactose catabolic process via tagatose-6-phosphate"/>
    <property type="evidence" value="ECO:0007669"/>
    <property type="project" value="UniProtKB-UniRule"/>
</dbReference>
<dbReference type="GO" id="GO:0009052">
    <property type="term" value="P:pentose-phosphate shunt, non-oxidative branch"/>
    <property type="evidence" value="ECO:0007669"/>
    <property type="project" value="TreeGrafter"/>
</dbReference>
<dbReference type="Gene3D" id="3.40.1400.10">
    <property type="entry name" value="Sugar-phosphate isomerase, RpiB/LacA/LacB"/>
    <property type="match status" value="1"/>
</dbReference>
<dbReference type="HAMAP" id="MF_01555">
    <property type="entry name" value="LacA"/>
    <property type="match status" value="1"/>
</dbReference>
<dbReference type="InterPro" id="IPR004783">
    <property type="entry name" value="LacA"/>
</dbReference>
<dbReference type="InterPro" id="IPR003500">
    <property type="entry name" value="RpiB_LacA_LacB"/>
</dbReference>
<dbReference type="InterPro" id="IPR036569">
    <property type="entry name" value="RpiB_LacA_LacB_sf"/>
</dbReference>
<dbReference type="NCBIfam" id="TIGR01118">
    <property type="entry name" value="lacA"/>
    <property type="match status" value="1"/>
</dbReference>
<dbReference type="NCBIfam" id="NF006380">
    <property type="entry name" value="PRK08621.1"/>
    <property type="match status" value="1"/>
</dbReference>
<dbReference type="NCBIfam" id="NF009257">
    <property type="entry name" value="PRK12613.1"/>
    <property type="match status" value="1"/>
</dbReference>
<dbReference type="NCBIfam" id="TIGR00689">
    <property type="entry name" value="rpiB_lacA_lacB"/>
    <property type="match status" value="1"/>
</dbReference>
<dbReference type="PANTHER" id="PTHR30345:SF5">
    <property type="entry name" value="GALACTOSE-6-PHOSPHATE ISOMERASE SUBUNIT LACA"/>
    <property type="match status" value="1"/>
</dbReference>
<dbReference type="PANTHER" id="PTHR30345">
    <property type="entry name" value="RIBOSE-5-PHOSPHATE ISOMERASE B"/>
    <property type="match status" value="1"/>
</dbReference>
<dbReference type="Pfam" id="PF02502">
    <property type="entry name" value="LacAB_rpiB"/>
    <property type="match status" value="1"/>
</dbReference>
<dbReference type="PIRSF" id="PIRSF005384">
    <property type="entry name" value="RpiB_LacA_B"/>
    <property type="match status" value="1"/>
</dbReference>
<dbReference type="SUPFAM" id="SSF89623">
    <property type="entry name" value="Ribose/Galactose isomerase RpiB/AlsB"/>
    <property type="match status" value="1"/>
</dbReference>
<gene>
    <name evidence="1" type="primary">lacA1</name>
    <name type="synonym">lacA.1</name>
    <name type="ordered locus">SPy_1708</name>
    <name type="ordered locus">M5005_Spy1398</name>
</gene>
<protein>
    <recommendedName>
        <fullName evidence="1">Galactose-6-phosphate isomerase subunit LacA 1</fullName>
        <ecNumber evidence="1">5.3.1.26</ecNumber>
    </recommendedName>
</protein>